<gene>
    <name evidence="1" type="primary">pgl</name>
    <name type="ordered locus">bbp_274</name>
</gene>
<sequence>MKQIIYITLAKNQEIEVWKLHDDFSLNLLQRISTQGEPQPIIISKDKKYLYIGVRPKFKVYSYKIKADGTLTKHACSTLPGSPNHFEIDHTGKYLFSSSYHFNCLSITPLDTLGIPRPVTQTIKNIFGCHASKMNCYNTCLFISALKKDCIYAYNFKKNGKLLKNTRKNFMTNVNFGPRHLDLQKCNNRLYSVNELNGSVDIWSINSFSNELILLKNINIMSKNYCNAAWSSDLHISPCEKFLYVSDRIENTISIIKLEKDVQNIEKIGHIKTELQPRTFSINSTGENLIVVGEKSNSFSVYKISKITGLLELKNTYSTGNRPVWISSLML</sequence>
<dbReference type="EC" id="3.1.1.31" evidence="1"/>
<dbReference type="EMBL" id="AE016826">
    <property type="protein sequence ID" value="AAO26999.1"/>
    <property type="molecule type" value="Genomic_DNA"/>
</dbReference>
<dbReference type="RefSeq" id="WP_011091400.1">
    <property type="nucleotide sequence ID" value="NC_004545.1"/>
</dbReference>
<dbReference type="SMR" id="Q89AK3"/>
<dbReference type="STRING" id="224915.bbp_274"/>
<dbReference type="KEGG" id="bab:bbp_274"/>
<dbReference type="eggNOG" id="COG2706">
    <property type="taxonomic scope" value="Bacteria"/>
</dbReference>
<dbReference type="HOGENOM" id="CLU_038716_2_0_6"/>
<dbReference type="OrthoDB" id="9790815at2"/>
<dbReference type="UniPathway" id="UPA00115">
    <property type="reaction ID" value="UER00409"/>
</dbReference>
<dbReference type="Proteomes" id="UP000000601">
    <property type="component" value="Chromosome"/>
</dbReference>
<dbReference type="GO" id="GO:0005829">
    <property type="term" value="C:cytosol"/>
    <property type="evidence" value="ECO:0007669"/>
    <property type="project" value="TreeGrafter"/>
</dbReference>
<dbReference type="GO" id="GO:0017057">
    <property type="term" value="F:6-phosphogluconolactonase activity"/>
    <property type="evidence" value="ECO:0007669"/>
    <property type="project" value="UniProtKB-UniRule"/>
</dbReference>
<dbReference type="GO" id="GO:0006006">
    <property type="term" value="P:glucose metabolic process"/>
    <property type="evidence" value="ECO:0007669"/>
    <property type="project" value="UniProtKB-KW"/>
</dbReference>
<dbReference type="GO" id="GO:0009051">
    <property type="term" value="P:pentose-phosphate shunt, oxidative branch"/>
    <property type="evidence" value="ECO:0007669"/>
    <property type="project" value="UniProtKB-UniRule"/>
</dbReference>
<dbReference type="Gene3D" id="2.130.10.10">
    <property type="entry name" value="YVTN repeat-like/Quinoprotein amine dehydrogenase"/>
    <property type="match status" value="1"/>
</dbReference>
<dbReference type="HAMAP" id="MF_01605">
    <property type="entry name" value="6P_gluconolactonase"/>
    <property type="match status" value="1"/>
</dbReference>
<dbReference type="InterPro" id="IPR022528">
    <property type="entry name" value="6-phosphogluconolactonase_YbhE"/>
</dbReference>
<dbReference type="InterPro" id="IPR050282">
    <property type="entry name" value="Cycloisomerase_2"/>
</dbReference>
<dbReference type="InterPro" id="IPR019405">
    <property type="entry name" value="Lactonase_7-beta_prop"/>
</dbReference>
<dbReference type="InterPro" id="IPR011045">
    <property type="entry name" value="N2O_reductase_N"/>
</dbReference>
<dbReference type="InterPro" id="IPR015943">
    <property type="entry name" value="WD40/YVTN_repeat-like_dom_sf"/>
</dbReference>
<dbReference type="NCBIfam" id="NF008258">
    <property type="entry name" value="PRK11028.1"/>
    <property type="match status" value="1"/>
</dbReference>
<dbReference type="PANTHER" id="PTHR30344:SF1">
    <property type="entry name" value="6-PHOSPHOGLUCONOLACTONASE"/>
    <property type="match status" value="1"/>
</dbReference>
<dbReference type="PANTHER" id="PTHR30344">
    <property type="entry name" value="6-PHOSPHOGLUCONOLACTONASE-RELATED"/>
    <property type="match status" value="1"/>
</dbReference>
<dbReference type="Pfam" id="PF10282">
    <property type="entry name" value="Lactonase"/>
    <property type="match status" value="1"/>
</dbReference>
<dbReference type="SUPFAM" id="SSF50974">
    <property type="entry name" value="Nitrous oxide reductase, N-terminal domain"/>
    <property type="match status" value="1"/>
</dbReference>
<dbReference type="SUPFAM" id="SSF50956">
    <property type="entry name" value="Thermostable phytase (3-phytase)"/>
    <property type="match status" value="1"/>
</dbReference>
<keyword id="KW-0119">Carbohydrate metabolism</keyword>
<keyword id="KW-0313">Glucose metabolism</keyword>
<keyword id="KW-0378">Hydrolase</keyword>
<keyword id="KW-1185">Reference proteome</keyword>
<proteinExistence type="inferred from homology"/>
<reference key="1">
    <citation type="journal article" date="2003" name="Proc. Natl. Acad. Sci. U.S.A.">
        <title>Reductive genome evolution in Buchnera aphidicola.</title>
        <authorList>
            <person name="van Ham R.C.H.J."/>
            <person name="Kamerbeek J."/>
            <person name="Palacios C."/>
            <person name="Rausell C."/>
            <person name="Abascal F."/>
            <person name="Bastolla U."/>
            <person name="Fernandez J.M."/>
            <person name="Jimenez L."/>
            <person name="Postigo M."/>
            <person name="Silva F.J."/>
            <person name="Tamames J."/>
            <person name="Viguera E."/>
            <person name="Latorre A."/>
            <person name="Valencia A."/>
            <person name="Moran F."/>
            <person name="Moya A."/>
        </authorList>
    </citation>
    <scope>NUCLEOTIDE SEQUENCE [LARGE SCALE GENOMIC DNA]</scope>
    <source>
        <strain>Bp</strain>
    </source>
</reference>
<protein>
    <recommendedName>
        <fullName evidence="1">6-phosphogluconolactonase</fullName>
        <shortName evidence="1">6-P-gluconolactonase</shortName>
        <ecNumber evidence="1">3.1.1.31</ecNumber>
    </recommendedName>
</protein>
<organism>
    <name type="scientific">Buchnera aphidicola subsp. Baizongia pistaciae (strain Bp)</name>
    <dbReference type="NCBI Taxonomy" id="224915"/>
    <lineage>
        <taxon>Bacteria</taxon>
        <taxon>Pseudomonadati</taxon>
        <taxon>Pseudomonadota</taxon>
        <taxon>Gammaproteobacteria</taxon>
        <taxon>Enterobacterales</taxon>
        <taxon>Erwiniaceae</taxon>
        <taxon>Buchnera</taxon>
    </lineage>
</organism>
<accession>Q89AK3</accession>
<comment type="function">
    <text evidence="1">Catalyzes the hydrolysis of 6-phosphogluconolactone to 6-phosphogluconate.</text>
</comment>
<comment type="catalytic activity">
    <reaction evidence="1">
        <text>6-phospho-D-glucono-1,5-lactone + H2O = 6-phospho-D-gluconate + H(+)</text>
        <dbReference type="Rhea" id="RHEA:12556"/>
        <dbReference type="ChEBI" id="CHEBI:15377"/>
        <dbReference type="ChEBI" id="CHEBI:15378"/>
        <dbReference type="ChEBI" id="CHEBI:57955"/>
        <dbReference type="ChEBI" id="CHEBI:58759"/>
        <dbReference type="EC" id="3.1.1.31"/>
    </reaction>
</comment>
<comment type="pathway">
    <text evidence="1">Carbohydrate degradation; pentose phosphate pathway; D-ribulose 5-phosphate from D-glucose 6-phosphate (oxidative stage): step 2/3.</text>
</comment>
<comment type="similarity">
    <text evidence="1">Belongs to the cycloisomerase 2 family.</text>
</comment>
<name>6PGL_BUCBP</name>
<evidence type="ECO:0000255" key="1">
    <source>
        <dbReference type="HAMAP-Rule" id="MF_01605"/>
    </source>
</evidence>
<feature type="chain" id="PRO_0000171130" description="6-phosphogluconolactonase">
    <location>
        <begin position="1"/>
        <end position="331"/>
    </location>
</feature>